<organism>
    <name type="scientific">Pseudoalteromonas translucida (strain TAC 125)</name>
    <dbReference type="NCBI Taxonomy" id="326442"/>
    <lineage>
        <taxon>Bacteria</taxon>
        <taxon>Pseudomonadati</taxon>
        <taxon>Pseudomonadota</taxon>
        <taxon>Gammaproteobacteria</taxon>
        <taxon>Alteromonadales</taxon>
        <taxon>Pseudoalteromonadaceae</taxon>
        <taxon>Pseudoalteromonas</taxon>
    </lineage>
</organism>
<sequence>MSNQRIRIRLKAFDHRLIDQSTAEIVETAKRTGAQVRGPIPLPTRFERFTVLTSPHVNKDARDQYEIRTHKRLIDIVEPTDKTVDALMRLDLAAGVDVQISLG</sequence>
<keyword id="KW-1185">Reference proteome</keyword>
<keyword id="KW-0687">Ribonucleoprotein</keyword>
<keyword id="KW-0689">Ribosomal protein</keyword>
<feature type="chain" id="PRO_0000237079" description="Small ribosomal subunit protein uS10">
    <location>
        <begin position="1"/>
        <end position="103"/>
    </location>
</feature>
<dbReference type="EMBL" id="CR954246">
    <property type="protein sequence ID" value="CAI85247.1"/>
    <property type="molecule type" value="Genomic_DNA"/>
</dbReference>
<dbReference type="SMR" id="Q3IF26"/>
<dbReference type="STRING" id="326442.PSHAa0143"/>
<dbReference type="KEGG" id="pha:PSHAa0143"/>
<dbReference type="eggNOG" id="COG0051">
    <property type="taxonomic scope" value="Bacteria"/>
</dbReference>
<dbReference type="HOGENOM" id="CLU_122625_1_3_6"/>
<dbReference type="BioCyc" id="PHAL326442:PSHA_RS00730-MONOMER"/>
<dbReference type="Proteomes" id="UP000006843">
    <property type="component" value="Chromosome I"/>
</dbReference>
<dbReference type="GO" id="GO:1990904">
    <property type="term" value="C:ribonucleoprotein complex"/>
    <property type="evidence" value="ECO:0007669"/>
    <property type="project" value="UniProtKB-KW"/>
</dbReference>
<dbReference type="GO" id="GO:0005840">
    <property type="term" value="C:ribosome"/>
    <property type="evidence" value="ECO:0007669"/>
    <property type="project" value="UniProtKB-KW"/>
</dbReference>
<dbReference type="GO" id="GO:0003735">
    <property type="term" value="F:structural constituent of ribosome"/>
    <property type="evidence" value="ECO:0007669"/>
    <property type="project" value="InterPro"/>
</dbReference>
<dbReference type="GO" id="GO:0000049">
    <property type="term" value="F:tRNA binding"/>
    <property type="evidence" value="ECO:0007669"/>
    <property type="project" value="UniProtKB-UniRule"/>
</dbReference>
<dbReference type="GO" id="GO:0006412">
    <property type="term" value="P:translation"/>
    <property type="evidence" value="ECO:0007669"/>
    <property type="project" value="UniProtKB-UniRule"/>
</dbReference>
<dbReference type="FunFam" id="3.30.70.600:FF:000001">
    <property type="entry name" value="30S ribosomal protein S10"/>
    <property type="match status" value="1"/>
</dbReference>
<dbReference type="Gene3D" id="3.30.70.600">
    <property type="entry name" value="Ribosomal protein S10 domain"/>
    <property type="match status" value="1"/>
</dbReference>
<dbReference type="HAMAP" id="MF_00508">
    <property type="entry name" value="Ribosomal_uS10"/>
    <property type="match status" value="1"/>
</dbReference>
<dbReference type="InterPro" id="IPR001848">
    <property type="entry name" value="Ribosomal_uS10"/>
</dbReference>
<dbReference type="InterPro" id="IPR018268">
    <property type="entry name" value="Ribosomal_uS10_CS"/>
</dbReference>
<dbReference type="InterPro" id="IPR027486">
    <property type="entry name" value="Ribosomal_uS10_dom"/>
</dbReference>
<dbReference type="InterPro" id="IPR036838">
    <property type="entry name" value="Ribosomal_uS10_dom_sf"/>
</dbReference>
<dbReference type="NCBIfam" id="NF001861">
    <property type="entry name" value="PRK00596.1"/>
    <property type="match status" value="1"/>
</dbReference>
<dbReference type="NCBIfam" id="TIGR01049">
    <property type="entry name" value="rpsJ_bact"/>
    <property type="match status" value="1"/>
</dbReference>
<dbReference type="PANTHER" id="PTHR11700">
    <property type="entry name" value="30S RIBOSOMAL PROTEIN S10 FAMILY MEMBER"/>
    <property type="match status" value="1"/>
</dbReference>
<dbReference type="Pfam" id="PF00338">
    <property type="entry name" value="Ribosomal_S10"/>
    <property type="match status" value="1"/>
</dbReference>
<dbReference type="PRINTS" id="PR00971">
    <property type="entry name" value="RIBOSOMALS10"/>
</dbReference>
<dbReference type="SMART" id="SM01403">
    <property type="entry name" value="Ribosomal_S10"/>
    <property type="match status" value="1"/>
</dbReference>
<dbReference type="SUPFAM" id="SSF54999">
    <property type="entry name" value="Ribosomal protein S10"/>
    <property type="match status" value="1"/>
</dbReference>
<dbReference type="PROSITE" id="PS00361">
    <property type="entry name" value="RIBOSOMAL_S10"/>
    <property type="match status" value="1"/>
</dbReference>
<gene>
    <name evidence="1" type="primary">rpsJ</name>
    <name type="ordered locus">PSHAa0143</name>
</gene>
<comment type="function">
    <text evidence="1">Involved in the binding of tRNA to the ribosomes.</text>
</comment>
<comment type="subunit">
    <text evidence="1">Part of the 30S ribosomal subunit.</text>
</comment>
<comment type="similarity">
    <text evidence="1">Belongs to the universal ribosomal protein uS10 family.</text>
</comment>
<protein>
    <recommendedName>
        <fullName evidence="1">Small ribosomal subunit protein uS10</fullName>
    </recommendedName>
    <alternativeName>
        <fullName evidence="2">30S ribosomal protein S10</fullName>
    </alternativeName>
</protein>
<name>RS10_PSET1</name>
<reference key="1">
    <citation type="journal article" date="2005" name="Genome Res.">
        <title>Coping with cold: the genome of the versatile marine Antarctica bacterium Pseudoalteromonas haloplanktis TAC125.</title>
        <authorList>
            <person name="Medigue C."/>
            <person name="Krin E."/>
            <person name="Pascal G."/>
            <person name="Barbe V."/>
            <person name="Bernsel A."/>
            <person name="Bertin P.N."/>
            <person name="Cheung F."/>
            <person name="Cruveiller S."/>
            <person name="D'Amico S."/>
            <person name="Duilio A."/>
            <person name="Fang G."/>
            <person name="Feller G."/>
            <person name="Ho C."/>
            <person name="Mangenot S."/>
            <person name="Marino G."/>
            <person name="Nilsson J."/>
            <person name="Parrilli E."/>
            <person name="Rocha E.P.C."/>
            <person name="Rouy Z."/>
            <person name="Sekowska A."/>
            <person name="Tutino M.L."/>
            <person name="Vallenet D."/>
            <person name="von Heijne G."/>
            <person name="Danchin A."/>
        </authorList>
    </citation>
    <scope>NUCLEOTIDE SEQUENCE [LARGE SCALE GENOMIC DNA]</scope>
    <source>
        <strain>TAC 125</strain>
    </source>
</reference>
<evidence type="ECO:0000255" key="1">
    <source>
        <dbReference type="HAMAP-Rule" id="MF_00508"/>
    </source>
</evidence>
<evidence type="ECO:0000305" key="2"/>
<proteinExistence type="inferred from homology"/>
<accession>Q3IF26</accession>